<gene>
    <name evidence="8" type="primary">TSPAN15</name>
    <name type="synonym">NET7</name>
    <name type="synonym">TM4SF15</name>
    <name type="ORF">UNQ677/PRO1311</name>
</gene>
<accession>O95858</accession>
<accession>Q6UW79</accession>
<feature type="chain" id="PRO_0000219263" description="Tetraspanin-15">
    <location>
        <begin position="1"/>
        <end position="294"/>
    </location>
</feature>
<feature type="topological domain" description="Cytoplasmic" evidence="1">
    <location>
        <begin position="1"/>
        <end position="23"/>
    </location>
</feature>
<feature type="transmembrane region" description="Helical" evidence="1">
    <location>
        <begin position="24"/>
        <end position="44"/>
    </location>
</feature>
<feature type="topological domain" description="Extracellular" evidence="1">
    <location>
        <begin position="45"/>
        <end position="62"/>
    </location>
</feature>
<feature type="transmembrane region" description="Helical" evidence="1">
    <location>
        <begin position="63"/>
        <end position="83"/>
    </location>
</feature>
<feature type="topological domain" description="Cytoplasmic" evidence="1">
    <location>
        <begin position="84"/>
        <end position="93"/>
    </location>
</feature>
<feature type="transmembrane region" description="Helical" evidence="1">
    <location>
        <begin position="94"/>
        <end position="114"/>
    </location>
</feature>
<feature type="topological domain" description="Extracellular" evidence="1">
    <location>
        <begin position="115"/>
        <end position="235"/>
    </location>
</feature>
<feature type="transmembrane region" description="Helical" evidence="1">
    <location>
        <begin position="236"/>
        <end position="256"/>
    </location>
</feature>
<feature type="topological domain" description="Cytoplasmic" evidence="1">
    <location>
        <begin position="257"/>
        <end position="294"/>
    </location>
</feature>
<feature type="glycosylation site" description="N-linked (GlcNAc...) asparagine" evidence="1">
    <location>
        <position position="118"/>
    </location>
</feature>
<feature type="glycosylation site" description="N-linked (GlcNAc...) asparagine" evidence="1 5">
    <location>
        <position position="189"/>
    </location>
</feature>
<feature type="glycosylation site" description="N-linked (GlcNAc...) asparagine" evidence="1">
    <location>
        <position position="230"/>
    </location>
</feature>
<feature type="disulfide bond" evidence="5 6 10 11">
    <location>
        <begin position="154"/>
        <end position="219"/>
    </location>
</feature>
<feature type="disulfide bond" evidence="5 6 10 11">
    <location>
        <begin position="155"/>
        <end position="185"/>
    </location>
</feature>
<feature type="disulfide bond" evidence="5 6 10 11">
    <location>
        <begin position="171"/>
        <end position="179"/>
    </location>
</feature>
<feature type="disulfide bond" evidence="5 6 10 11">
    <location>
        <begin position="186"/>
        <end position="198"/>
    </location>
</feature>
<feature type="mutagenesis site" description="Alsmost abolishes interaction with ADAM10. Decreases maturation of ADAM10 and CDH2/N-cadherin cleavage." evidence="5">
    <original>NQYH</original>
    <variation>AQAA</variation>
    <location>
        <begin position="166"/>
        <end position="169"/>
    </location>
</feature>
<feature type="mutagenesis site" description="No effect on interaction with ADAM10. Decreases maturation of ADAM10. No effect on CDH2/N-cadherin cleavage." evidence="5">
    <original>VVNT</original>
    <variation>AVAA</variation>
    <location>
        <begin position="193"/>
        <end position="196"/>
    </location>
</feature>
<feature type="mutagenesis site" description="No effect on interaction with ADAM10. No effect on maturation of ADAM10. No effect on CDH2/N-cadherin cleavage." evidence="5">
    <original>DKE</original>
    <variation>AAA</variation>
    <location>
        <begin position="204"/>
        <end position="206"/>
    </location>
</feature>
<feature type="mutagenesis site" description="Strongly reduces palmitoylation levels." evidence="4">
    <original>CCLC</original>
    <variation>AALA</variation>
    <location>
        <begin position="288"/>
        <end position="291"/>
    </location>
</feature>
<feature type="sequence conflict" description="In Ref. 2; AAQ89293." evidence="7" ref="2">
    <original>G</original>
    <variation>C</variation>
    <location>
        <position position="236"/>
    </location>
</feature>
<feature type="helix" evidence="13">
    <location>
        <begin position="14"/>
        <end position="50"/>
    </location>
</feature>
<feature type="helix" evidence="13">
    <location>
        <begin position="62"/>
        <end position="84"/>
    </location>
</feature>
<feature type="turn" evidence="13">
    <location>
        <begin position="85"/>
        <end position="87"/>
    </location>
</feature>
<feature type="helix" evidence="13">
    <location>
        <begin position="89"/>
        <end position="115"/>
    </location>
</feature>
<feature type="helix" evidence="12">
    <location>
        <begin position="117"/>
        <end position="133"/>
    </location>
</feature>
<feature type="turn" evidence="12">
    <location>
        <begin position="134"/>
        <end position="137"/>
    </location>
</feature>
<feature type="helix" evidence="12">
    <location>
        <begin position="139"/>
        <end position="151"/>
    </location>
</feature>
<feature type="strand" evidence="12">
    <location>
        <begin position="156"/>
        <end position="159"/>
    </location>
</feature>
<feature type="helix" evidence="12">
    <location>
        <begin position="160"/>
        <end position="165"/>
    </location>
</feature>
<feature type="turn" evidence="12">
    <location>
        <begin position="167"/>
        <end position="169"/>
    </location>
</feature>
<feature type="strand" evidence="12">
    <location>
        <begin position="174"/>
        <end position="177"/>
    </location>
</feature>
<feature type="helix" evidence="12">
    <location>
        <begin position="183"/>
        <end position="185"/>
    </location>
</feature>
<feature type="strand" evidence="12">
    <location>
        <begin position="190"/>
        <end position="192"/>
    </location>
</feature>
<feature type="turn" evidence="12">
    <location>
        <begin position="196"/>
        <end position="199"/>
    </location>
</feature>
<feature type="strand" evidence="13">
    <location>
        <begin position="203"/>
        <end position="205"/>
    </location>
</feature>
<feature type="helix" evidence="12">
    <location>
        <begin position="207"/>
        <end position="210"/>
    </location>
</feature>
<feature type="turn" evidence="12">
    <location>
        <begin position="211"/>
        <end position="213"/>
    </location>
</feature>
<feature type="helix" evidence="12">
    <location>
        <begin position="219"/>
        <end position="229"/>
    </location>
</feature>
<feature type="helix" evidence="13">
    <location>
        <begin position="231"/>
        <end position="266"/>
    </location>
</feature>
<reference key="1">
    <citation type="submission" date="1999-01" db="EMBL/GenBank/DDBJ databases">
        <title>New tetraspans identified in the EST database.</title>
        <authorList>
            <person name="Rubinstein E."/>
            <person name="Serru V."/>
            <person name="Dessen P."/>
            <person name="Boucheix C."/>
        </authorList>
    </citation>
    <scope>NUCLEOTIDE SEQUENCE [MRNA]</scope>
</reference>
<reference key="2">
    <citation type="journal article" date="2003" name="Genome Res.">
        <title>The secreted protein discovery initiative (SPDI), a large-scale effort to identify novel human secreted and transmembrane proteins: a bioinformatics assessment.</title>
        <authorList>
            <person name="Clark H.F."/>
            <person name="Gurney A.L."/>
            <person name="Abaya E."/>
            <person name="Baker K."/>
            <person name="Baldwin D.T."/>
            <person name="Brush J."/>
            <person name="Chen J."/>
            <person name="Chow B."/>
            <person name="Chui C."/>
            <person name="Crowley C."/>
            <person name="Currell B."/>
            <person name="Deuel B."/>
            <person name="Dowd P."/>
            <person name="Eaton D."/>
            <person name="Foster J.S."/>
            <person name="Grimaldi C."/>
            <person name="Gu Q."/>
            <person name="Hass P.E."/>
            <person name="Heldens S."/>
            <person name="Huang A."/>
            <person name="Kim H.S."/>
            <person name="Klimowski L."/>
            <person name="Jin Y."/>
            <person name="Johnson S."/>
            <person name="Lee J."/>
            <person name="Lewis L."/>
            <person name="Liao D."/>
            <person name="Mark M.R."/>
            <person name="Robbie E."/>
            <person name="Sanchez C."/>
            <person name="Schoenfeld J."/>
            <person name="Seshagiri S."/>
            <person name="Simmons L."/>
            <person name="Singh J."/>
            <person name="Smith V."/>
            <person name="Stinson J."/>
            <person name="Vagts A."/>
            <person name="Vandlen R.L."/>
            <person name="Watanabe C."/>
            <person name="Wieand D."/>
            <person name="Woods K."/>
            <person name="Xie M.-H."/>
            <person name="Yansura D.G."/>
            <person name="Yi S."/>
            <person name="Yu G."/>
            <person name="Yuan J."/>
            <person name="Zhang M."/>
            <person name="Zhang Z."/>
            <person name="Goddard A.D."/>
            <person name="Wood W.I."/>
            <person name="Godowski P.J."/>
            <person name="Gray A.M."/>
        </authorList>
    </citation>
    <scope>NUCLEOTIDE SEQUENCE [LARGE SCALE MRNA]</scope>
</reference>
<reference key="3">
    <citation type="journal article" date="2004" name="Genome Res.">
        <title>The status, quality, and expansion of the NIH full-length cDNA project: the Mammalian Gene Collection (MGC).</title>
        <authorList>
            <consortium name="The MGC Project Team"/>
        </authorList>
    </citation>
    <scope>NUCLEOTIDE SEQUENCE [LARGE SCALE MRNA]</scope>
    <source>
        <tissue>Kidney</tissue>
    </source>
</reference>
<reference key="4">
    <citation type="journal article" date="2016" name="Cell. Mol. Life Sci.">
        <title>TspanC8 tetraspanins differentially regulate the cleavage of ADAM10 substrates, Notch activation and ADAM10 membrane compartmentalization.</title>
        <authorList>
            <person name="Jouannet S."/>
            <person name="Saint-Pol J."/>
            <person name="Fernandez L."/>
            <person name="Nguyen V."/>
            <person name="Charrin S."/>
            <person name="Boucheix C."/>
            <person name="Brou C."/>
            <person name="Milhiet P.E."/>
            <person name="Rubinstein E."/>
        </authorList>
    </citation>
    <scope>FUNCTION</scope>
    <scope>INTERACTION WITH ADAM10</scope>
    <scope>SUBCELLULAR LOCATION</scope>
</reference>
<reference key="5">
    <citation type="journal article" date="2018" name="Cell Rep.">
        <title>A Dock-and-Lock Mechanism Clusters ADAM10 at Cell-Cell Junctions to Promote alpha-Toxin Cytotoxicity.</title>
        <authorList>
            <person name="Shah J."/>
            <person name="Rouaud F."/>
            <person name="Guerrera D."/>
            <person name="Vasileva E."/>
            <person name="Popov L.M."/>
            <person name="Kelley W.L."/>
            <person name="Rubinstein E."/>
            <person name="Carette J.E."/>
            <person name="Amieva M.R."/>
            <person name="Citi S."/>
        </authorList>
    </citation>
    <scope>FUNCTION</scope>
    <scope>SUBCELLULAR LOCATION</scope>
</reference>
<reference key="6">
    <citation type="journal article" date="2020" name="Life. Sci Alliance">
        <title>TspanC8 tetraspanins differentially regulate ADAM10 endocytosis and half-life.</title>
        <authorList>
            <person name="Eschenbrenner E."/>
            <person name="Jouannet S."/>
            <person name="Clay D."/>
            <person name="Chaker J."/>
            <person name="Boucheix C."/>
            <person name="Brou C."/>
            <person name="Tomlinson M.G."/>
            <person name="Charrin S."/>
            <person name="Rubinstein E."/>
        </authorList>
    </citation>
    <scope>FUNCTION</scope>
    <scope>INTERACTION WITH ADAM10</scope>
    <scope>SUBCELLULAR LOCATION</scope>
    <scope>MUTAGENESIS OF 288-CYS--CYS-291</scope>
    <scope>PALMITOYLATION</scope>
</reference>
<reference evidence="9 10" key="7">
    <citation type="journal article" date="2022" name="Structure">
        <title>Crystal structure of the Tspan15 LEL domain reveals a conserved ADAM10 binding site.</title>
        <authorList>
            <person name="Lipper C.H."/>
            <person name="Gabriel K.H."/>
            <person name="Seegar T.C.M."/>
            <person name="Duerr K.L."/>
            <person name="Tomlinson M.G."/>
            <person name="Blacklow S.C."/>
        </authorList>
    </citation>
    <scope>X-RAY CRYSTALLOGRAPHY (2.52 ANGSTROMS) OF 115-230</scope>
    <scope>FUNCTION</scope>
    <scope>INTERACTION WITH ADAM10</scope>
    <scope>GLYCOSYLATION AT ASN-189</scope>
    <scope>DISULFIDE BOND</scope>
    <scope>MUTAGENESIS OF 166-ASN--HIS-169; 193-VAL--THR-196 AND 204-ASP--GLU-206</scope>
</reference>
<reference evidence="11" key="8">
    <citation type="journal article" date="2023" name="Cell">
        <title>Structural basis for membrane-proximal proteolysis of substrates by ADAM10.</title>
        <authorList>
            <person name="Lipper C.H."/>
            <person name="Egan E.D."/>
            <person name="Gabriel K.H."/>
            <person name="Blacklow S.C."/>
        </authorList>
    </citation>
    <scope>STRUCTURE BY ELECTRON MICROSCOPY (3.3 ANGSTROMS) OF 1-294 IN COMPLEX WITH ADAM10</scope>
    <scope>INTERACTION WITH ADAM10</scope>
    <scope>FUNCTION</scope>
    <scope>DISULFIDE BOND</scope>
</reference>
<organism>
    <name type="scientific">Homo sapiens</name>
    <name type="common">Human</name>
    <dbReference type="NCBI Taxonomy" id="9606"/>
    <lineage>
        <taxon>Eukaryota</taxon>
        <taxon>Metazoa</taxon>
        <taxon>Chordata</taxon>
        <taxon>Craniata</taxon>
        <taxon>Vertebrata</taxon>
        <taxon>Euteleostomi</taxon>
        <taxon>Mammalia</taxon>
        <taxon>Eutheria</taxon>
        <taxon>Euarchontoglires</taxon>
        <taxon>Primates</taxon>
        <taxon>Haplorrhini</taxon>
        <taxon>Catarrhini</taxon>
        <taxon>Hominidae</taxon>
        <taxon>Homo</taxon>
    </lineage>
</organism>
<keyword id="KW-0002">3D-structure</keyword>
<keyword id="KW-1003">Cell membrane</keyword>
<keyword id="KW-1015">Disulfide bond</keyword>
<keyword id="KW-0967">Endosome</keyword>
<keyword id="KW-0325">Glycoprotein</keyword>
<keyword id="KW-0472">Membrane</keyword>
<keyword id="KW-1267">Proteomics identification</keyword>
<keyword id="KW-1185">Reference proteome</keyword>
<keyword id="KW-0812">Transmembrane</keyword>
<keyword id="KW-1133">Transmembrane helix</keyword>
<protein>
    <recommendedName>
        <fullName>Tetraspanin-15</fullName>
        <shortName>Tspan-15</shortName>
    </recommendedName>
    <alternativeName>
        <fullName>Tetraspan NET-7</fullName>
    </alternativeName>
    <alternativeName>
        <fullName>Transmembrane 4 superfamily member 15</fullName>
    </alternativeName>
</protein>
<proteinExistence type="evidence at protein level"/>
<sequence>MPRGDSEQVRYCARFSYLWLKFSLIIYSTVFWLIGALVLSVGIYAEVERQKYKTLESAFLAPAIILILLGVVMFMVSFIGVLASLRDNLYLLQAFMYILGICLIMELIGGVVALTFRNQTIDFLNDNIRRGIENYYDDLDFKNIMDFVQKKFKCCGGEDYRDWSKNQYHDCSAPGPLACGVPYTCCIRNTTEVVNTMCGYKTIDKERFSVQDVIYVRGCTNAVIIWFMDNYTIMAGILLGILLPQFLGVLLTLLYITRVEDIIMEHSVTDGLLGPGAKPSVEAAGTGCCLCYPN</sequence>
<evidence type="ECO:0000255" key="1"/>
<evidence type="ECO:0000269" key="2">
    <source>
    </source>
</evidence>
<evidence type="ECO:0000269" key="3">
    <source>
    </source>
</evidence>
<evidence type="ECO:0000269" key="4">
    <source>
    </source>
</evidence>
<evidence type="ECO:0000269" key="5">
    <source>
    </source>
</evidence>
<evidence type="ECO:0000269" key="6">
    <source>
    </source>
</evidence>
<evidence type="ECO:0000305" key="7"/>
<evidence type="ECO:0000312" key="8">
    <source>
        <dbReference type="HGNC" id="HGNC:23298"/>
    </source>
</evidence>
<evidence type="ECO:0007744" key="9">
    <source>
        <dbReference type="PDB" id="7RD5"/>
    </source>
</evidence>
<evidence type="ECO:0007744" key="10">
    <source>
        <dbReference type="PDB" id="7RDB"/>
    </source>
</evidence>
<evidence type="ECO:0007744" key="11">
    <source>
        <dbReference type="PDB" id="8ESV"/>
    </source>
</evidence>
<evidence type="ECO:0007829" key="12">
    <source>
        <dbReference type="PDB" id="7RDB"/>
    </source>
</evidence>
<evidence type="ECO:0007829" key="13">
    <source>
        <dbReference type="PDB" id="8ESV"/>
    </source>
</evidence>
<name>TSN15_HUMAN</name>
<comment type="function">
    <text evidence="2 3 4 5">Part of TspanC8 subgroup, composed of 6 members that interact with the transmembrane metalloprotease ADAM10. This interaction is required for ADAM10 exit from the endoplasmic reticulum and for enzymatic maturation and trafficking to the cell surface as well as substrate specificity. Different TspanC8/ADAM10 complexes have distinct substrates (PubMed:26686862, PubMed:30463011, PubMed:31792032, PubMed:34739841). Promotes ADAM10-mediated cleavage of CDH2 (PubMed:34739841). Negatively regulates ligand-induced Notch activity probably by regulating ADAM10 activity (PubMed:26686862, PubMed:31792032).</text>
</comment>
<comment type="subunit">
    <text evidence="2 4 5 6">Interacts with ADAM10; the interaction influences ADAM10 substrate specificity, endocytosis and turnover.</text>
</comment>
<comment type="interaction">
    <interactant intactId="EBI-7361096">
        <id>O95858</id>
    </interactant>
    <interactant intactId="EBI-1536151">
        <id>O14672</id>
        <label>ADAM10</label>
    </interactant>
    <organismsDiffer>false</organismsDiffer>
    <experiments>11</experiments>
</comment>
<comment type="interaction">
    <interactant intactId="EBI-7361096">
        <id>O95858</id>
    </interactant>
    <interactant intactId="EBI-7797098">
        <id>P04921</id>
        <label>GYPC</label>
    </interactant>
    <organismsDiffer>false</organismsDiffer>
    <experiments>3</experiments>
</comment>
<comment type="interaction">
    <interactant intactId="EBI-7361096">
        <id>O95858</id>
    </interactant>
    <interactant intactId="EBI-12200293">
        <id>P0DN84</id>
        <label>STRIT1</label>
    </interactant>
    <organismsDiffer>false</organismsDiffer>
    <experiments>3</experiments>
</comment>
<comment type="interaction">
    <interactant intactId="EBI-7361096">
        <id>O95858</id>
    </interactant>
    <interactant intactId="EBI-7131783">
        <id>Q8N205</id>
        <label>SYNE4</label>
    </interactant>
    <organismsDiffer>false</organismsDiffer>
    <experiments>3</experiments>
</comment>
<comment type="subcellular location">
    <subcellularLocation>
        <location evidence="2 3 4">Cell membrane</location>
        <topology evidence="7">Multi-pass membrane protein</topology>
    </subcellularLocation>
    <subcellularLocation>
        <location evidence="2">Late endosome membrane</location>
    </subcellularLocation>
</comment>
<comment type="PTM">
    <text evidence="4">Palmitoylated.</text>
</comment>
<comment type="similarity">
    <text evidence="7">Belongs to the tetraspanin (TM4SF) family.</text>
</comment>
<dbReference type="EMBL" id="AF120266">
    <property type="protein sequence ID" value="AAD17295.1"/>
    <property type="molecule type" value="mRNA"/>
</dbReference>
<dbReference type="EMBL" id="AY358934">
    <property type="protein sequence ID" value="AAQ89293.1"/>
    <property type="molecule type" value="mRNA"/>
</dbReference>
<dbReference type="EMBL" id="BC003157">
    <property type="protein sequence ID" value="AAH03157.1"/>
    <property type="molecule type" value="mRNA"/>
</dbReference>
<dbReference type="EMBL" id="BC004161">
    <property type="protein sequence ID" value="AAH04161.1"/>
    <property type="molecule type" value="mRNA"/>
</dbReference>
<dbReference type="CCDS" id="CCDS7294.1"/>
<dbReference type="RefSeq" id="NP_036471.1">
    <property type="nucleotide sequence ID" value="NM_012339.5"/>
</dbReference>
<dbReference type="PDB" id="7RD5">
    <property type="method" value="X-ray"/>
    <property type="resolution" value="3.60 A"/>
    <property type="chains" value="E/F=115-230"/>
</dbReference>
<dbReference type="PDB" id="7RDB">
    <property type="method" value="X-ray"/>
    <property type="resolution" value="2.52 A"/>
    <property type="chains" value="A/B/C/D/E/F/G/H/I/J/K/L/M/N/O/P/Q/R/S/T/U/V/W/X=115-230"/>
</dbReference>
<dbReference type="PDB" id="8ESV">
    <property type="method" value="EM"/>
    <property type="resolution" value="3.30 A"/>
    <property type="chains" value="B=1-294"/>
</dbReference>
<dbReference type="PDBsum" id="7RD5"/>
<dbReference type="PDBsum" id="7RDB"/>
<dbReference type="PDBsum" id="8ESV"/>
<dbReference type="EMDB" id="EMD-28580"/>
<dbReference type="SMR" id="O95858"/>
<dbReference type="BioGRID" id="117099">
    <property type="interactions" value="297"/>
</dbReference>
<dbReference type="FunCoup" id="O95858">
    <property type="interactions" value="566"/>
</dbReference>
<dbReference type="IntAct" id="O95858">
    <property type="interactions" value="309"/>
</dbReference>
<dbReference type="MINT" id="O95858"/>
<dbReference type="STRING" id="9606.ENSP00000362387"/>
<dbReference type="TCDB" id="8.A.40.1.17">
    <property type="family name" value="the tetraspanin (tetraspanin) family"/>
</dbReference>
<dbReference type="GlyCosmos" id="O95858">
    <property type="glycosylation" value="3 sites, No reported glycans"/>
</dbReference>
<dbReference type="GlyGen" id="O95858">
    <property type="glycosylation" value="3 sites, 3 N-linked glycans (3 sites)"/>
</dbReference>
<dbReference type="iPTMnet" id="O95858"/>
<dbReference type="PhosphoSitePlus" id="O95858"/>
<dbReference type="SwissPalm" id="O95858"/>
<dbReference type="BioMuta" id="TSPAN15"/>
<dbReference type="jPOST" id="O95858"/>
<dbReference type="MassIVE" id="O95858"/>
<dbReference type="PaxDb" id="9606-ENSP00000362387"/>
<dbReference type="PeptideAtlas" id="O95858"/>
<dbReference type="ProteomicsDB" id="51091"/>
<dbReference type="Pumba" id="O95858"/>
<dbReference type="Antibodypedia" id="28879">
    <property type="antibodies" value="105 antibodies from 21 providers"/>
</dbReference>
<dbReference type="DNASU" id="23555"/>
<dbReference type="Ensembl" id="ENST00000373290.7">
    <property type="protein sequence ID" value="ENSP00000362387.2"/>
    <property type="gene ID" value="ENSG00000099282.10"/>
</dbReference>
<dbReference type="GeneID" id="23555"/>
<dbReference type="KEGG" id="hsa:23555"/>
<dbReference type="MANE-Select" id="ENST00000373290.7">
    <property type="protein sequence ID" value="ENSP00000362387.2"/>
    <property type="RefSeq nucleotide sequence ID" value="NM_012339.5"/>
    <property type="RefSeq protein sequence ID" value="NP_036471.1"/>
</dbReference>
<dbReference type="UCSC" id="uc001jpo.2">
    <property type="organism name" value="human"/>
</dbReference>
<dbReference type="AGR" id="HGNC:23298"/>
<dbReference type="CTD" id="23555"/>
<dbReference type="DisGeNET" id="23555"/>
<dbReference type="GeneCards" id="TSPAN15"/>
<dbReference type="HGNC" id="HGNC:23298">
    <property type="gene designation" value="TSPAN15"/>
</dbReference>
<dbReference type="HPA" id="ENSG00000099282">
    <property type="expression patterns" value="Low tissue specificity"/>
</dbReference>
<dbReference type="MIM" id="613140">
    <property type="type" value="gene"/>
</dbReference>
<dbReference type="neXtProt" id="NX_O95858"/>
<dbReference type="OpenTargets" id="ENSG00000099282"/>
<dbReference type="PharmGKB" id="PA128394634"/>
<dbReference type="VEuPathDB" id="HostDB:ENSG00000099282"/>
<dbReference type="eggNOG" id="KOG3882">
    <property type="taxonomic scope" value="Eukaryota"/>
</dbReference>
<dbReference type="GeneTree" id="ENSGT00940000157973"/>
<dbReference type="HOGENOM" id="CLU_055524_0_1_1"/>
<dbReference type="InParanoid" id="O95858"/>
<dbReference type="OMA" id="FAGAGCC"/>
<dbReference type="OrthoDB" id="10051815at2759"/>
<dbReference type="PAN-GO" id="O95858">
    <property type="GO annotations" value="3 GO annotations based on evolutionary models"/>
</dbReference>
<dbReference type="PhylomeDB" id="O95858"/>
<dbReference type="TreeFam" id="TF313002"/>
<dbReference type="PathwayCommons" id="O95858"/>
<dbReference type="Reactome" id="R-HSA-977225">
    <property type="pathway name" value="Amyloid fiber formation"/>
</dbReference>
<dbReference type="SignaLink" id="O95858"/>
<dbReference type="SIGNOR" id="O95858"/>
<dbReference type="BioGRID-ORCS" id="23555">
    <property type="hits" value="12 hits in 1156 CRISPR screens"/>
</dbReference>
<dbReference type="ChiTaRS" id="TSPAN15">
    <property type="organism name" value="human"/>
</dbReference>
<dbReference type="GenomeRNAi" id="23555"/>
<dbReference type="Pharos" id="O95858">
    <property type="development level" value="Tbio"/>
</dbReference>
<dbReference type="PRO" id="PR:O95858"/>
<dbReference type="Proteomes" id="UP000005640">
    <property type="component" value="Chromosome 10"/>
</dbReference>
<dbReference type="RNAct" id="O95858">
    <property type="molecule type" value="protein"/>
</dbReference>
<dbReference type="Bgee" id="ENSG00000099282">
    <property type="expression patterns" value="Expressed in tibial nerve and 173 other cell types or tissues"/>
</dbReference>
<dbReference type="ExpressionAtlas" id="O95858">
    <property type="expression patterns" value="baseline and differential"/>
</dbReference>
<dbReference type="GO" id="GO:0030054">
    <property type="term" value="C:cell junction"/>
    <property type="evidence" value="ECO:0000314"/>
    <property type="project" value="HPA"/>
</dbReference>
<dbReference type="GO" id="GO:0009986">
    <property type="term" value="C:cell surface"/>
    <property type="evidence" value="ECO:0007669"/>
    <property type="project" value="Ensembl"/>
</dbReference>
<dbReference type="GO" id="GO:0005829">
    <property type="term" value="C:cytosol"/>
    <property type="evidence" value="ECO:0000314"/>
    <property type="project" value="HPA"/>
</dbReference>
<dbReference type="GO" id="GO:0005788">
    <property type="term" value="C:endoplasmic reticulum lumen"/>
    <property type="evidence" value="ECO:0000304"/>
    <property type="project" value="Reactome"/>
</dbReference>
<dbReference type="GO" id="GO:0043231">
    <property type="term" value="C:intracellular membrane-bounded organelle"/>
    <property type="evidence" value="ECO:0000314"/>
    <property type="project" value="HPA"/>
</dbReference>
<dbReference type="GO" id="GO:0031902">
    <property type="term" value="C:late endosome membrane"/>
    <property type="evidence" value="ECO:0007669"/>
    <property type="project" value="UniProtKB-SubCell"/>
</dbReference>
<dbReference type="GO" id="GO:0016604">
    <property type="term" value="C:nuclear body"/>
    <property type="evidence" value="ECO:0000314"/>
    <property type="project" value="HPA"/>
</dbReference>
<dbReference type="GO" id="GO:0005886">
    <property type="term" value="C:plasma membrane"/>
    <property type="evidence" value="ECO:0000314"/>
    <property type="project" value="UniProtKB"/>
</dbReference>
<dbReference type="GO" id="GO:0097197">
    <property type="term" value="C:tetraspanin-enriched microdomain"/>
    <property type="evidence" value="ECO:0007669"/>
    <property type="project" value="Ensembl"/>
</dbReference>
<dbReference type="GO" id="GO:0019899">
    <property type="term" value="F:enzyme binding"/>
    <property type="evidence" value="ECO:0000353"/>
    <property type="project" value="UniProtKB"/>
</dbReference>
<dbReference type="GO" id="GO:0045746">
    <property type="term" value="P:negative regulation of Notch signaling pathway"/>
    <property type="evidence" value="ECO:0000314"/>
    <property type="project" value="UniProtKB"/>
</dbReference>
<dbReference type="GO" id="GO:0072659">
    <property type="term" value="P:protein localization to plasma membrane"/>
    <property type="evidence" value="ECO:0000315"/>
    <property type="project" value="UniProtKB"/>
</dbReference>
<dbReference type="GO" id="GO:0051604">
    <property type="term" value="P:protein maturation"/>
    <property type="evidence" value="ECO:0000314"/>
    <property type="project" value="UniProtKB"/>
</dbReference>
<dbReference type="GO" id="GO:0051043">
    <property type="term" value="P:regulation of membrane protein ectodomain proteolysis"/>
    <property type="evidence" value="ECO:0000314"/>
    <property type="project" value="UniProtKB"/>
</dbReference>
<dbReference type="CDD" id="cd03158">
    <property type="entry name" value="penumbra_like_LEL"/>
    <property type="match status" value="1"/>
</dbReference>
<dbReference type="FunFam" id="1.10.1450.10:FF:000011">
    <property type="entry name" value="Tetraspanin"/>
    <property type="match status" value="1"/>
</dbReference>
<dbReference type="Gene3D" id="1.10.1450.10">
    <property type="entry name" value="Tetraspanin"/>
    <property type="match status" value="1"/>
</dbReference>
<dbReference type="InterPro" id="IPR018499">
    <property type="entry name" value="Tetraspanin/Peripherin"/>
</dbReference>
<dbReference type="InterPro" id="IPR000301">
    <property type="entry name" value="Tetraspanin_animals"/>
</dbReference>
<dbReference type="InterPro" id="IPR008952">
    <property type="entry name" value="Tetraspanin_EC2_sf"/>
</dbReference>
<dbReference type="PANTHER" id="PTHR19282">
    <property type="entry name" value="TETRASPANIN"/>
    <property type="match status" value="1"/>
</dbReference>
<dbReference type="PANTHER" id="PTHR19282:SF159">
    <property type="entry name" value="TETRASPANIN-15"/>
    <property type="match status" value="1"/>
</dbReference>
<dbReference type="Pfam" id="PF00335">
    <property type="entry name" value="Tetraspanin"/>
    <property type="match status" value="1"/>
</dbReference>
<dbReference type="PIRSF" id="PIRSF002419">
    <property type="entry name" value="Tetraspanin"/>
    <property type="match status" value="1"/>
</dbReference>
<dbReference type="PRINTS" id="PR00259">
    <property type="entry name" value="TMFOUR"/>
</dbReference>
<dbReference type="SUPFAM" id="SSF48652">
    <property type="entry name" value="Tetraspanin"/>
    <property type="match status" value="1"/>
</dbReference>